<sequence length="315" mass="35885">MSKKVMGLLVMAYGTPYKEEDLERYYTHIRHGRKPSEEMLADLRERYEAIGGISPLAAITKQQAEKLAERLNEVQDEIEFRMYLGLKHIEPFVEDAVQQMHEDGIEEAVSIVLAPHFSTFSVKSYNGRAKEEAARLGGPKLTCVESWYTEPKFIQYWADRVKETYASMSEREREKAVLIVSAHSLPEKIIAMGDPYPKQLQETADFIAKEAGVSEYVIGWQSAGNTPEPWLGPDVQDLTRQLYEEKGYEAFVYVPAGFVSDHLEVLYDNDIECKQVTDELGVSYYRPPMPNAHPQFIDALATVVLNHLRKEGESL</sequence>
<reference key="1">
    <citation type="journal article" date="2008" name="Genome Biol.">
        <title>Encapsulated in silica: genome, proteome and physiology of the thermophilic bacterium Anoxybacillus flavithermus WK1.</title>
        <authorList>
            <person name="Saw J.H."/>
            <person name="Mountain B.W."/>
            <person name="Feng L."/>
            <person name="Omelchenko M.V."/>
            <person name="Hou S."/>
            <person name="Saito J.A."/>
            <person name="Stott M.B."/>
            <person name="Li D."/>
            <person name="Zhao G."/>
            <person name="Wu J."/>
            <person name="Galperin M.Y."/>
            <person name="Koonin E.V."/>
            <person name="Makarova K.S."/>
            <person name="Wolf Y.I."/>
            <person name="Rigden D.J."/>
            <person name="Dunfield P.F."/>
            <person name="Wang L."/>
            <person name="Alam M."/>
        </authorList>
    </citation>
    <scope>NUCLEOTIDE SEQUENCE [LARGE SCALE GENOMIC DNA]</scope>
    <source>
        <strain>DSM 21510 / WK1</strain>
    </source>
</reference>
<name>CPFC_ANOFW</name>
<gene>
    <name evidence="1" type="primary">cpfC</name>
    <name type="ordered locus">Aflv_2279</name>
</gene>
<organism>
    <name type="scientific">Anoxybacillus flavithermus (strain DSM 21510 / WK1)</name>
    <dbReference type="NCBI Taxonomy" id="491915"/>
    <lineage>
        <taxon>Bacteria</taxon>
        <taxon>Bacillati</taxon>
        <taxon>Bacillota</taxon>
        <taxon>Bacilli</taxon>
        <taxon>Bacillales</taxon>
        <taxon>Anoxybacillaceae</taxon>
        <taxon>Anoxybacillus</taxon>
    </lineage>
</organism>
<protein>
    <recommendedName>
        <fullName evidence="1">Coproporphyrin III ferrochelatase</fullName>
        <ecNumber evidence="1">4.99.1.9</ecNumber>
    </recommendedName>
</protein>
<keyword id="KW-0963">Cytoplasm</keyword>
<keyword id="KW-0350">Heme biosynthesis</keyword>
<keyword id="KW-0408">Iron</keyword>
<keyword id="KW-0456">Lyase</keyword>
<keyword id="KW-0479">Metal-binding</keyword>
<keyword id="KW-0627">Porphyrin biosynthesis</keyword>
<evidence type="ECO:0000255" key="1">
    <source>
        <dbReference type="HAMAP-Rule" id="MF_00323"/>
    </source>
</evidence>
<comment type="function">
    <text evidence="1">Involved in coproporphyrin-dependent heme b biosynthesis. Catalyzes the insertion of ferrous iron into coproporphyrin III to form Fe-coproporphyrin III.</text>
</comment>
<comment type="catalytic activity">
    <reaction evidence="1">
        <text>Fe-coproporphyrin III + 2 H(+) = coproporphyrin III + Fe(2+)</text>
        <dbReference type="Rhea" id="RHEA:49572"/>
        <dbReference type="ChEBI" id="CHEBI:15378"/>
        <dbReference type="ChEBI" id="CHEBI:29033"/>
        <dbReference type="ChEBI" id="CHEBI:68438"/>
        <dbReference type="ChEBI" id="CHEBI:131725"/>
        <dbReference type="EC" id="4.99.1.9"/>
    </reaction>
    <physiologicalReaction direction="right-to-left" evidence="1">
        <dbReference type="Rhea" id="RHEA:49574"/>
    </physiologicalReaction>
</comment>
<comment type="pathway">
    <text evidence="1">Porphyrin-containing compound metabolism; protoheme biosynthesis.</text>
</comment>
<comment type="subcellular location">
    <subcellularLocation>
        <location evidence="1">Cytoplasm</location>
    </subcellularLocation>
</comment>
<comment type="similarity">
    <text evidence="1">Belongs to the ferrochelatase family.</text>
</comment>
<accession>B7GF12</accession>
<proteinExistence type="inferred from homology"/>
<dbReference type="EC" id="4.99.1.9" evidence="1"/>
<dbReference type="EMBL" id="CP000922">
    <property type="protein sequence ID" value="ACJ34636.1"/>
    <property type="molecule type" value="Genomic_DNA"/>
</dbReference>
<dbReference type="RefSeq" id="WP_012575811.1">
    <property type="nucleotide sequence ID" value="NC_011567.1"/>
</dbReference>
<dbReference type="SMR" id="B7GF12"/>
<dbReference type="STRING" id="491915.Aflv_2279"/>
<dbReference type="GeneID" id="7038531"/>
<dbReference type="KEGG" id="afl:Aflv_2279"/>
<dbReference type="PATRIC" id="fig|491915.6.peg.2347"/>
<dbReference type="eggNOG" id="COG0276">
    <property type="taxonomic scope" value="Bacteria"/>
</dbReference>
<dbReference type="HOGENOM" id="CLU_018884_2_1_9"/>
<dbReference type="UniPathway" id="UPA00252"/>
<dbReference type="Proteomes" id="UP000000742">
    <property type="component" value="Chromosome"/>
</dbReference>
<dbReference type="GO" id="GO:0005737">
    <property type="term" value="C:cytoplasm"/>
    <property type="evidence" value="ECO:0007669"/>
    <property type="project" value="UniProtKB-SubCell"/>
</dbReference>
<dbReference type="GO" id="GO:0004325">
    <property type="term" value="F:ferrochelatase activity"/>
    <property type="evidence" value="ECO:0007669"/>
    <property type="project" value="UniProtKB-UniRule"/>
</dbReference>
<dbReference type="GO" id="GO:0046872">
    <property type="term" value="F:metal ion binding"/>
    <property type="evidence" value="ECO:0007669"/>
    <property type="project" value="UniProtKB-KW"/>
</dbReference>
<dbReference type="GO" id="GO:0006783">
    <property type="term" value="P:heme biosynthetic process"/>
    <property type="evidence" value="ECO:0007669"/>
    <property type="project" value="UniProtKB-UniRule"/>
</dbReference>
<dbReference type="CDD" id="cd00419">
    <property type="entry name" value="Ferrochelatase_C"/>
    <property type="match status" value="1"/>
</dbReference>
<dbReference type="CDD" id="cd03411">
    <property type="entry name" value="Ferrochelatase_N"/>
    <property type="match status" value="1"/>
</dbReference>
<dbReference type="FunFam" id="3.40.50.1400:FF:000009">
    <property type="entry name" value="Ferrochelatase"/>
    <property type="match status" value="1"/>
</dbReference>
<dbReference type="Gene3D" id="3.40.50.1400">
    <property type="match status" value="2"/>
</dbReference>
<dbReference type="HAMAP" id="MF_00323">
    <property type="entry name" value="Ferrochelatase"/>
    <property type="match status" value="1"/>
</dbReference>
<dbReference type="InterPro" id="IPR001015">
    <property type="entry name" value="Ferrochelatase"/>
</dbReference>
<dbReference type="InterPro" id="IPR019772">
    <property type="entry name" value="Ferrochelatase_AS"/>
</dbReference>
<dbReference type="InterPro" id="IPR033644">
    <property type="entry name" value="Ferrochelatase_C"/>
</dbReference>
<dbReference type="InterPro" id="IPR033659">
    <property type="entry name" value="Ferrochelatase_N"/>
</dbReference>
<dbReference type="NCBIfam" id="TIGR00109">
    <property type="entry name" value="hemH"/>
    <property type="match status" value="1"/>
</dbReference>
<dbReference type="NCBIfam" id="NF009095">
    <property type="entry name" value="PRK12435.1"/>
    <property type="match status" value="1"/>
</dbReference>
<dbReference type="PANTHER" id="PTHR11108">
    <property type="entry name" value="FERROCHELATASE"/>
    <property type="match status" value="1"/>
</dbReference>
<dbReference type="PANTHER" id="PTHR11108:SF1">
    <property type="entry name" value="FERROCHELATASE, MITOCHONDRIAL"/>
    <property type="match status" value="1"/>
</dbReference>
<dbReference type="Pfam" id="PF00762">
    <property type="entry name" value="Ferrochelatase"/>
    <property type="match status" value="1"/>
</dbReference>
<dbReference type="SUPFAM" id="SSF53800">
    <property type="entry name" value="Chelatase"/>
    <property type="match status" value="1"/>
</dbReference>
<dbReference type="PROSITE" id="PS00534">
    <property type="entry name" value="FERROCHELATASE"/>
    <property type="match status" value="1"/>
</dbReference>
<feature type="chain" id="PRO_1000119601" description="Coproporphyrin III ferrochelatase">
    <location>
        <begin position="1"/>
        <end position="315"/>
    </location>
</feature>
<feature type="binding site" description="axial binding residue" evidence="1">
    <location>
        <position position="13"/>
    </location>
    <ligand>
        <name>Fe-coproporphyrin III</name>
        <dbReference type="ChEBI" id="CHEBI:68438"/>
    </ligand>
    <ligandPart>
        <name>Fe</name>
        <dbReference type="ChEBI" id="CHEBI:18248"/>
    </ligandPart>
</feature>
<feature type="binding site" evidence="1">
    <location>
        <position position="30"/>
    </location>
    <ligand>
        <name>Fe-coproporphyrin III</name>
        <dbReference type="ChEBI" id="CHEBI:68438"/>
    </ligand>
</feature>
<feature type="binding site" evidence="1">
    <location>
        <begin position="46"/>
        <end position="47"/>
    </location>
    <ligand>
        <name>Fe-coproporphyrin III</name>
        <dbReference type="ChEBI" id="CHEBI:68438"/>
    </ligand>
</feature>
<feature type="binding site" evidence="1">
    <location>
        <position position="54"/>
    </location>
    <ligand>
        <name>Fe-coproporphyrin III</name>
        <dbReference type="ChEBI" id="CHEBI:68438"/>
    </ligand>
</feature>
<feature type="binding site" evidence="1">
    <location>
        <position position="125"/>
    </location>
    <ligand>
        <name>Fe-coproporphyrin III</name>
        <dbReference type="ChEBI" id="CHEBI:68438"/>
    </ligand>
</feature>
<feature type="binding site" evidence="1">
    <location>
        <position position="183"/>
    </location>
    <ligand>
        <name>Fe(2+)</name>
        <dbReference type="ChEBI" id="CHEBI:29033"/>
    </ligand>
</feature>
<feature type="binding site" evidence="1">
    <location>
        <position position="264"/>
    </location>
    <ligand>
        <name>Fe(2+)</name>
        <dbReference type="ChEBI" id="CHEBI:29033"/>
    </ligand>
</feature>